<name>ATPL_ECOLC</name>
<organism>
    <name type="scientific">Escherichia coli (strain ATCC 8739 / DSM 1576 / NBRC 3972 / NCIMB 8545 / WDCM 00012 / Crooks)</name>
    <dbReference type="NCBI Taxonomy" id="481805"/>
    <lineage>
        <taxon>Bacteria</taxon>
        <taxon>Pseudomonadati</taxon>
        <taxon>Pseudomonadota</taxon>
        <taxon>Gammaproteobacteria</taxon>
        <taxon>Enterobacterales</taxon>
        <taxon>Enterobacteriaceae</taxon>
        <taxon>Escherichia</taxon>
    </lineage>
</organism>
<gene>
    <name evidence="1" type="primary">atpE</name>
    <name type="ordered locus">EcolC_4257</name>
</gene>
<proteinExistence type="inferred from homology"/>
<accession>B1IX01</accession>
<keyword id="KW-0066">ATP synthesis</keyword>
<keyword id="KW-0997">Cell inner membrane</keyword>
<keyword id="KW-1003">Cell membrane</keyword>
<keyword id="KW-0138">CF(0)</keyword>
<keyword id="KW-0375">Hydrogen ion transport</keyword>
<keyword id="KW-0406">Ion transport</keyword>
<keyword id="KW-0446">Lipid-binding</keyword>
<keyword id="KW-0472">Membrane</keyword>
<keyword id="KW-0812">Transmembrane</keyword>
<keyword id="KW-1133">Transmembrane helix</keyword>
<keyword id="KW-0813">Transport</keyword>
<comment type="function">
    <text evidence="1">F(1)F(0) ATP synthase produces ATP from ADP in the presence of a proton or sodium gradient. F-type ATPases consist of two structural domains, F(1) containing the extramembraneous catalytic core and F(0) containing the membrane proton channel, linked together by a central stalk and a peripheral stalk. During catalysis, ATP synthesis in the catalytic domain of F(1) is coupled via a rotary mechanism of the central stalk subunits to proton translocation.</text>
</comment>
<comment type="function">
    <text evidence="1">Key component of the F(0) channel; it plays a direct role in translocation across the membrane. A homomeric c-ring of between 10-14 subunits forms the central stalk rotor element with the F(1) delta and epsilon subunits.</text>
</comment>
<comment type="subunit">
    <text evidence="1">F-type ATPases have 2 components, F(1) - the catalytic core - and F(0) - the membrane proton channel. F(1) has five subunits: alpha(3), beta(3), gamma(1), delta(1), epsilon(1). F(0) has three main subunits: a(1), b(2) and c(10-14). The alpha and beta chains form an alternating ring which encloses part of the gamma chain. F(1) is attached to F(0) by a central stalk formed by the gamma and epsilon chains, while a peripheral stalk is formed by the delta and b chains.</text>
</comment>
<comment type="subcellular location">
    <subcellularLocation>
        <location evidence="1">Cell inner membrane</location>
        <topology evidence="1">Multi-pass membrane protein</topology>
    </subcellularLocation>
</comment>
<comment type="similarity">
    <text evidence="1">Belongs to the ATPase C chain family.</text>
</comment>
<reference key="1">
    <citation type="submission" date="2008-02" db="EMBL/GenBank/DDBJ databases">
        <title>Complete sequence of Escherichia coli C str. ATCC 8739.</title>
        <authorList>
            <person name="Copeland A."/>
            <person name="Lucas S."/>
            <person name="Lapidus A."/>
            <person name="Glavina del Rio T."/>
            <person name="Dalin E."/>
            <person name="Tice H."/>
            <person name="Bruce D."/>
            <person name="Goodwin L."/>
            <person name="Pitluck S."/>
            <person name="Kiss H."/>
            <person name="Brettin T."/>
            <person name="Detter J.C."/>
            <person name="Han C."/>
            <person name="Kuske C.R."/>
            <person name="Schmutz J."/>
            <person name="Larimer F."/>
            <person name="Land M."/>
            <person name="Hauser L."/>
            <person name="Kyrpides N."/>
            <person name="Mikhailova N."/>
            <person name="Ingram L."/>
            <person name="Richardson P."/>
        </authorList>
    </citation>
    <scope>NUCLEOTIDE SEQUENCE [LARGE SCALE GENOMIC DNA]</scope>
    <source>
        <strain>ATCC 8739 / DSM 1576 / NBRC 3972 / NCIMB 8545 / WDCM 00012 / Crooks</strain>
    </source>
</reference>
<feature type="chain" id="PRO_1000184371" description="ATP synthase subunit c">
    <location>
        <begin position="1"/>
        <end position="79"/>
    </location>
</feature>
<feature type="transmembrane region" description="Helical" evidence="1">
    <location>
        <begin position="11"/>
        <end position="31"/>
    </location>
</feature>
<feature type="transmembrane region" description="Helical" evidence="1">
    <location>
        <begin position="53"/>
        <end position="73"/>
    </location>
</feature>
<feature type="site" description="Reversibly protonated during proton transport" evidence="1">
    <location>
        <position position="61"/>
    </location>
</feature>
<protein>
    <recommendedName>
        <fullName evidence="1">ATP synthase subunit c</fullName>
    </recommendedName>
    <alternativeName>
        <fullName evidence="1">ATP synthase F(0) sector subunit c</fullName>
    </alternativeName>
    <alternativeName>
        <fullName evidence="1">F-type ATPase subunit c</fullName>
        <shortName evidence="1">F-ATPase subunit c</shortName>
    </alternativeName>
    <alternativeName>
        <fullName evidence="1">Lipid-binding protein</fullName>
    </alternativeName>
</protein>
<sequence length="79" mass="8256">MENLNMDLLYMAAAVMMGLAAIGAAIGIGILGGKFLEGAARQPDLIPLLRTQFFIVMGLVDAIPMIAVGLGLYVMFAVA</sequence>
<evidence type="ECO:0000255" key="1">
    <source>
        <dbReference type="HAMAP-Rule" id="MF_01396"/>
    </source>
</evidence>
<dbReference type="EMBL" id="CP000946">
    <property type="protein sequence ID" value="ACA79853.1"/>
    <property type="molecule type" value="Genomic_DNA"/>
</dbReference>
<dbReference type="RefSeq" id="WP_000429386.1">
    <property type="nucleotide sequence ID" value="NZ_MTFT01000013.1"/>
</dbReference>
<dbReference type="SMR" id="B1IX01"/>
<dbReference type="GeneID" id="98390858"/>
<dbReference type="KEGG" id="ecl:EcolC_4257"/>
<dbReference type="HOGENOM" id="CLU_148047_1_0_6"/>
<dbReference type="GO" id="GO:0005886">
    <property type="term" value="C:plasma membrane"/>
    <property type="evidence" value="ECO:0007669"/>
    <property type="project" value="UniProtKB-SubCell"/>
</dbReference>
<dbReference type="GO" id="GO:0045259">
    <property type="term" value="C:proton-transporting ATP synthase complex"/>
    <property type="evidence" value="ECO:0007669"/>
    <property type="project" value="UniProtKB-KW"/>
</dbReference>
<dbReference type="GO" id="GO:0033177">
    <property type="term" value="C:proton-transporting two-sector ATPase complex, proton-transporting domain"/>
    <property type="evidence" value="ECO:0007669"/>
    <property type="project" value="InterPro"/>
</dbReference>
<dbReference type="GO" id="GO:0008289">
    <property type="term" value="F:lipid binding"/>
    <property type="evidence" value="ECO:0007669"/>
    <property type="project" value="UniProtKB-KW"/>
</dbReference>
<dbReference type="GO" id="GO:0046933">
    <property type="term" value="F:proton-transporting ATP synthase activity, rotational mechanism"/>
    <property type="evidence" value="ECO:0007669"/>
    <property type="project" value="UniProtKB-UniRule"/>
</dbReference>
<dbReference type="CDD" id="cd18185">
    <property type="entry name" value="ATP-synt_Fo_c_ATPE"/>
    <property type="match status" value="1"/>
</dbReference>
<dbReference type="FunFam" id="1.20.20.10:FF:000002">
    <property type="entry name" value="ATP synthase subunit c"/>
    <property type="match status" value="1"/>
</dbReference>
<dbReference type="Gene3D" id="1.20.20.10">
    <property type="entry name" value="F1F0 ATP synthase subunit C"/>
    <property type="match status" value="1"/>
</dbReference>
<dbReference type="HAMAP" id="MF_01396">
    <property type="entry name" value="ATP_synth_c_bact"/>
    <property type="match status" value="1"/>
</dbReference>
<dbReference type="InterPro" id="IPR005953">
    <property type="entry name" value="ATP_synth_csu_bac/chlpt"/>
</dbReference>
<dbReference type="InterPro" id="IPR000454">
    <property type="entry name" value="ATP_synth_F0_csu"/>
</dbReference>
<dbReference type="InterPro" id="IPR020537">
    <property type="entry name" value="ATP_synth_F0_csu_DDCD_BS"/>
</dbReference>
<dbReference type="InterPro" id="IPR038662">
    <property type="entry name" value="ATP_synth_F0_csu_sf"/>
</dbReference>
<dbReference type="InterPro" id="IPR002379">
    <property type="entry name" value="ATPase_proteolipid_c-like_dom"/>
</dbReference>
<dbReference type="InterPro" id="IPR035921">
    <property type="entry name" value="F/V-ATP_Csub_sf"/>
</dbReference>
<dbReference type="NCBIfam" id="TIGR01260">
    <property type="entry name" value="ATP_synt_c"/>
    <property type="match status" value="1"/>
</dbReference>
<dbReference type="NCBIfam" id="NF005363">
    <property type="entry name" value="PRK06876.1"/>
    <property type="match status" value="1"/>
</dbReference>
<dbReference type="Pfam" id="PF00137">
    <property type="entry name" value="ATP-synt_C"/>
    <property type="match status" value="1"/>
</dbReference>
<dbReference type="PRINTS" id="PR00124">
    <property type="entry name" value="ATPASEC"/>
</dbReference>
<dbReference type="SUPFAM" id="SSF81333">
    <property type="entry name" value="F1F0 ATP synthase subunit C"/>
    <property type="match status" value="1"/>
</dbReference>
<dbReference type="PROSITE" id="PS00605">
    <property type="entry name" value="ATPASE_C"/>
    <property type="match status" value="1"/>
</dbReference>